<gene>
    <name evidence="1" type="primary">ftsH</name>
    <name type="ordered locus">Mfl672</name>
</gene>
<reference key="1">
    <citation type="submission" date="2004-06" db="EMBL/GenBank/DDBJ databases">
        <authorList>
            <person name="Birren B.W."/>
            <person name="Stange-Thomann N."/>
            <person name="Hafez N."/>
            <person name="DeCaprio D."/>
            <person name="Fisher S."/>
            <person name="Butler J."/>
            <person name="Elkins T."/>
            <person name="Kodira C.D."/>
            <person name="Major J."/>
            <person name="Wang S."/>
            <person name="Nicol R."/>
            <person name="Nusbaum C."/>
        </authorList>
    </citation>
    <scope>NUCLEOTIDE SEQUENCE [LARGE SCALE GENOMIC DNA]</scope>
    <source>
        <strain>ATCC 33453 / NBRC 100688 / NCTC 11704 / L1</strain>
    </source>
</reference>
<name>FTSH_MESFL</name>
<accession>Q6F0E5</accession>
<organism>
    <name type="scientific">Mesoplasma florum (strain ATCC 33453 / NBRC 100688 / NCTC 11704 / L1)</name>
    <name type="common">Acholeplasma florum</name>
    <dbReference type="NCBI Taxonomy" id="265311"/>
    <lineage>
        <taxon>Bacteria</taxon>
        <taxon>Bacillati</taxon>
        <taxon>Mycoplasmatota</taxon>
        <taxon>Mollicutes</taxon>
        <taxon>Entomoplasmatales</taxon>
        <taxon>Entomoplasmataceae</taxon>
        <taxon>Mesoplasma</taxon>
    </lineage>
</organism>
<keyword id="KW-0067">ATP-binding</keyword>
<keyword id="KW-1003">Cell membrane</keyword>
<keyword id="KW-0378">Hydrolase</keyword>
<keyword id="KW-0472">Membrane</keyword>
<keyword id="KW-0479">Metal-binding</keyword>
<keyword id="KW-0482">Metalloprotease</keyword>
<keyword id="KW-0547">Nucleotide-binding</keyword>
<keyword id="KW-0645">Protease</keyword>
<keyword id="KW-1185">Reference proteome</keyword>
<keyword id="KW-0812">Transmembrane</keyword>
<keyword id="KW-1133">Transmembrane helix</keyword>
<keyword id="KW-0862">Zinc</keyword>
<evidence type="ECO:0000255" key="1">
    <source>
        <dbReference type="HAMAP-Rule" id="MF_01458"/>
    </source>
</evidence>
<dbReference type="EC" id="3.4.24.-" evidence="1"/>
<dbReference type="EMBL" id="AE017263">
    <property type="protein sequence ID" value="AAT76028.1"/>
    <property type="molecule type" value="Genomic_DNA"/>
</dbReference>
<dbReference type="RefSeq" id="WP_011183568.1">
    <property type="nucleotide sequence ID" value="NC_006055.1"/>
</dbReference>
<dbReference type="RefSeq" id="YP_053912.1">
    <property type="nucleotide sequence ID" value="NC_006055.1"/>
</dbReference>
<dbReference type="SMR" id="Q6F0E5"/>
<dbReference type="STRING" id="265311.Mfl672"/>
<dbReference type="PaxDb" id="265311-Mfl672"/>
<dbReference type="EnsemblBacteria" id="AAT76028">
    <property type="protein sequence ID" value="AAT76028"/>
    <property type="gene ID" value="Mfl672"/>
</dbReference>
<dbReference type="GeneID" id="2898159"/>
<dbReference type="KEGG" id="mfl:Mfl672"/>
<dbReference type="PATRIC" id="fig|265311.5.peg.674"/>
<dbReference type="eggNOG" id="COG0465">
    <property type="taxonomic scope" value="Bacteria"/>
</dbReference>
<dbReference type="HOGENOM" id="CLU_000688_16_2_14"/>
<dbReference type="OrthoDB" id="9809379at2"/>
<dbReference type="Proteomes" id="UP000006647">
    <property type="component" value="Chromosome"/>
</dbReference>
<dbReference type="GO" id="GO:0005886">
    <property type="term" value="C:plasma membrane"/>
    <property type="evidence" value="ECO:0007669"/>
    <property type="project" value="UniProtKB-SubCell"/>
</dbReference>
<dbReference type="GO" id="GO:0005524">
    <property type="term" value="F:ATP binding"/>
    <property type="evidence" value="ECO:0007669"/>
    <property type="project" value="UniProtKB-UniRule"/>
</dbReference>
<dbReference type="GO" id="GO:0016887">
    <property type="term" value="F:ATP hydrolysis activity"/>
    <property type="evidence" value="ECO:0007669"/>
    <property type="project" value="UniProtKB-UniRule"/>
</dbReference>
<dbReference type="GO" id="GO:0004176">
    <property type="term" value="F:ATP-dependent peptidase activity"/>
    <property type="evidence" value="ECO:0007669"/>
    <property type="project" value="InterPro"/>
</dbReference>
<dbReference type="GO" id="GO:0004222">
    <property type="term" value="F:metalloendopeptidase activity"/>
    <property type="evidence" value="ECO:0007669"/>
    <property type="project" value="InterPro"/>
</dbReference>
<dbReference type="GO" id="GO:0008270">
    <property type="term" value="F:zinc ion binding"/>
    <property type="evidence" value="ECO:0007669"/>
    <property type="project" value="UniProtKB-UniRule"/>
</dbReference>
<dbReference type="GO" id="GO:0030163">
    <property type="term" value="P:protein catabolic process"/>
    <property type="evidence" value="ECO:0007669"/>
    <property type="project" value="UniProtKB-UniRule"/>
</dbReference>
<dbReference type="GO" id="GO:0006508">
    <property type="term" value="P:proteolysis"/>
    <property type="evidence" value="ECO:0007669"/>
    <property type="project" value="UniProtKB-KW"/>
</dbReference>
<dbReference type="CDD" id="cd19501">
    <property type="entry name" value="RecA-like_FtsH"/>
    <property type="match status" value="1"/>
</dbReference>
<dbReference type="FunFam" id="1.10.8.60:FF:000001">
    <property type="entry name" value="ATP-dependent zinc metalloprotease FtsH"/>
    <property type="match status" value="1"/>
</dbReference>
<dbReference type="FunFam" id="1.20.58.760:FF:000001">
    <property type="entry name" value="ATP-dependent zinc metalloprotease FtsH"/>
    <property type="match status" value="1"/>
</dbReference>
<dbReference type="FunFam" id="3.40.50.300:FF:000001">
    <property type="entry name" value="ATP-dependent zinc metalloprotease FtsH"/>
    <property type="match status" value="1"/>
</dbReference>
<dbReference type="Gene3D" id="1.10.8.60">
    <property type="match status" value="1"/>
</dbReference>
<dbReference type="Gene3D" id="3.40.50.300">
    <property type="entry name" value="P-loop containing nucleotide triphosphate hydrolases"/>
    <property type="match status" value="1"/>
</dbReference>
<dbReference type="Gene3D" id="1.20.58.760">
    <property type="entry name" value="Peptidase M41"/>
    <property type="match status" value="1"/>
</dbReference>
<dbReference type="HAMAP" id="MF_01458">
    <property type="entry name" value="FtsH"/>
    <property type="match status" value="1"/>
</dbReference>
<dbReference type="InterPro" id="IPR003593">
    <property type="entry name" value="AAA+_ATPase"/>
</dbReference>
<dbReference type="InterPro" id="IPR041569">
    <property type="entry name" value="AAA_lid_3"/>
</dbReference>
<dbReference type="InterPro" id="IPR003959">
    <property type="entry name" value="ATPase_AAA_core"/>
</dbReference>
<dbReference type="InterPro" id="IPR003960">
    <property type="entry name" value="ATPase_AAA_CS"/>
</dbReference>
<dbReference type="InterPro" id="IPR005936">
    <property type="entry name" value="FtsH"/>
</dbReference>
<dbReference type="InterPro" id="IPR027417">
    <property type="entry name" value="P-loop_NTPase"/>
</dbReference>
<dbReference type="InterPro" id="IPR000642">
    <property type="entry name" value="Peptidase_M41"/>
</dbReference>
<dbReference type="InterPro" id="IPR037219">
    <property type="entry name" value="Peptidase_M41-like"/>
</dbReference>
<dbReference type="NCBIfam" id="TIGR01241">
    <property type="entry name" value="FtsH_fam"/>
    <property type="match status" value="1"/>
</dbReference>
<dbReference type="PANTHER" id="PTHR23076:SF97">
    <property type="entry name" value="ATP-DEPENDENT ZINC METALLOPROTEASE YME1L1"/>
    <property type="match status" value="1"/>
</dbReference>
<dbReference type="PANTHER" id="PTHR23076">
    <property type="entry name" value="METALLOPROTEASE M41 FTSH"/>
    <property type="match status" value="1"/>
</dbReference>
<dbReference type="Pfam" id="PF00004">
    <property type="entry name" value="AAA"/>
    <property type="match status" value="1"/>
</dbReference>
<dbReference type="Pfam" id="PF17862">
    <property type="entry name" value="AAA_lid_3"/>
    <property type="match status" value="1"/>
</dbReference>
<dbReference type="Pfam" id="PF01434">
    <property type="entry name" value="Peptidase_M41"/>
    <property type="match status" value="1"/>
</dbReference>
<dbReference type="SMART" id="SM00382">
    <property type="entry name" value="AAA"/>
    <property type="match status" value="1"/>
</dbReference>
<dbReference type="SUPFAM" id="SSF140990">
    <property type="entry name" value="FtsH protease domain-like"/>
    <property type="match status" value="1"/>
</dbReference>
<dbReference type="SUPFAM" id="SSF52540">
    <property type="entry name" value="P-loop containing nucleoside triphosphate hydrolases"/>
    <property type="match status" value="1"/>
</dbReference>
<dbReference type="PROSITE" id="PS00674">
    <property type="entry name" value="AAA"/>
    <property type="match status" value="1"/>
</dbReference>
<proteinExistence type="inferred from homology"/>
<sequence>MKTKKSKSTLWFWLIILLAIIVTIIIIAVTVKGTTQVISDATFADWMSKSPQIDPNADKYWKNVIIYYGSNNTVVVKGSYFLESTGKYVNFVAYLTQKRFETIMADKPYPWPALVYQGSVGMALLVSLAPLLIYVLLFGGIIWFMMKSSSGAGAGAGNIFGMGKNRARAEKSDVKFANVAGIEEEKSELVELVDYLKFPAKYAEAGARAPKGVLMEGPPGTGKTLLAKAVAGEAGVSFFSIAGSEFEEMFVGVGASRVREMFNDAKKSAPAIIFIDEIDAVGRKRNNGMGSGGNEQTLNQLLVEMDGFGTNSGIIVMAATNRADVLDPALLRPGRFDRVIQVSLPDIKERKAILELHAKGKKIDGSVDWYRVAERTPGFSGAQLENVLNEAAILMVREKRDIITITEIDEAIDRVVGGPAKKSRAMTKQDKDIVSYHESGHALIGLKLDSASKVQKVTIIPRGNAGGYTIMTPKDETVFSSKKDLFATIAGYLGGRAAEEIMFGKENVTTGAHDDLDKATNIARRMVVQFGMSSLGMTKFLTMAEESYGKMEGTYSDETAARIDAEISKILEESYKIALKIIKENMETLELLAESLRVLETITAEQIEYINVNKKLPEEVLEQKNRMAKEDEKIKKGEIIDIKVEDLDID</sequence>
<feature type="chain" id="PRO_0000400352" description="ATP-dependent zinc metalloprotease FtsH">
    <location>
        <begin position="1"/>
        <end position="650"/>
    </location>
</feature>
<feature type="topological domain" description="Cytoplasmic" evidence="1">
    <location>
        <begin position="1"/>
        <end position="10"/>
    </location>
</feature>
<feature type="transmembrane region" description="Helical" evidence="1">
    <location>
        <begin position="11"/>
        <end position="31"/>
    </location>
</feature>
<feature type="topological domain" description="Extracellular" evidence="1">
    <location>
        <begin position="32"/>
        <end position="123"/>
    </location>
</feature>
<feature type="transmembrane region" description="Helical" evidence="1">
    <location>
        <begin position="124"/>
        <end position="144"/>
    </location>
</feature>
<feature type="topological domain" description="Cytoplasmic" evidence="1">
    <location>
        <begin position="145"/>
        <end position="650"/>
    </location>
</feature>
<feature type="active site" evidence="1">
    <location>
        <position position="438"/>
    </location>
</feature>
<feature type="binding site" evidence="1">
    <location>
        <begin position="217"/>
        <end position="224"/>
    </location>
    <ligand>
        <name>ATP</name>
        <dbReference type="ChEBI" id="CHEBI:30616"/>
    </ligand>
</feature>
<feature type="binding site" evidence="1">
    <location>
        <position position="437"/>
    </location>
    <ligand>
        <name>Zn(2+)</name>
        <dbReference type="ChEBI" id="CHEBI:29105"/>
        <note>catalytic</note>
    </ligand>
</feature>
<feature type="binding site" evidence="1">
    <location>
        <position position="441"/>
    </location>
    <ligand>
        <name>Zn(2+)</name>
        <dbReference type="ChEBI" id="CHEBI:29105"/>
        <note>catalytic</note>
    </ligand>
</feature>
<feature type="binding site" evidence="1">
    <location>
        <position position="515"/>
    </location>
    <ligand>
        <name>Zn(2+)</name>
        <dbReference type="ChEBI" id="CHEBI:29105"/>
        <note>catalytic</note>
    </ligand>
</feature>
<comment type="function">
    <text evidence="1">Acts as a processive, ATP-dependent zinc metallopeptidase for both cytoplasmic and membrane proteins. Plays a role in the quality control of integral membrane proteins.</text>
</comment>
<comment type="cofactor">
    <cofactor evidence="1">
        <name>Zn(2+)</name>
        <dbReference type="ChEBI" id="CHEBI:29105"/>
    </cofactor>
    <text evidence="1">Binds 1 zinc ion per subunit.</text>
</comment>
<comment type="subunit">
    <text evidence="1">Homohexamer.</text>
</comment>
<comment type="subcellular location">
    <subcellularLocation>
        <location evidence="1">Cell membrane</location>
        <topology evidence="1">Multi-pass membrane protein</topology>
        <orientation evidence="1">Cytoplasmic side</orientation>
    </subcellularLocation>
</comment>
<comment type="similarity">
    <text evidence="1">In the central section; belongs to the AAA ATPase family.</text>
</comment>
<comment type="similarity">
    <text evidence="1">In the C-terminal section; belongs to the peptidase M41 family.</text>
</comment>
<protein>
    <recommendedName>
        <fullName evidence="1">ATP-dependent zinc metalloprotease FtsH</fullName>
        <ecNumber evidence="1">3.4.24.-</ecNumber>
    </recommendedName>
</protein>